<keyword id="KW-0256">Endoplasmic reticulum</keyword>
<keyword id="KW-0333">Golgi apparatus</keyword>
<keyword id="KW-0472">Membrane</keyword>
<keyword id="KW-0479">Metal-binding</keyword>
<keyword id="KW-1185">Reference proteome</keyword>
<keyword id="KW-0812">Transmembrane</keyword>
<keyword id="KW-1133">Transmembrane helix</keyword>
<keyword id="KW-0862">Zinc</keyword>
<keyword id="KW-0863">Zinc-finger</keyword>
<reference key="1">
    <citation type="journal article" date="2005" name="Science">
        <title>The transcriptional landscape of the mammalian genome.</title>
        <authorList>
            <person name="Carninci P."/>
            <person name="Kasukawa T."/>
            <person name="Katayama S."/>
            <person name="Gough J."/>
            <person name="Frith M.C."/>
            <person name="Maeda N."/>
            <person name="Oyama R."/>
            <person name="Ravasi T."/>
            <person name="Lenhard B."/>
            <person name="Wells C."/>
            <person name="Kodzius R."/>
            <person name="Shimokawa K."/>
            <person name="Bajic V.B."/>
            <person name="Brenner S.E."/>
            <person name="Batalov S."/>
            <person name="Forrest A.R."/>
            <person name="Zavolan M."/>
            <person name="Davis M.J."/>
            <person name="Wilming L.G."/>
            <person name="Aidinis V."/>
            <person name="Allen J.E."/>
            <person name="Ambesi-Impiombato A."/>
            <person name="Apweiler R."/>
            <person name="Aturaliya R.N."/>
            <person name="Bailey T.L."/>
            <person name="Bansal M."/>
            <person name="Baxter L."/>
            <person name="Beisel K.W."/>
            <person name="Bersano T."/>
            <person name="Bono H."/>
            <person name="Chalk A.M."/>
            <person name="Chiu K.P."/>
            <person name="Choudhary V."/>
            <person name="Christoffels A."/>
            <person name="Clutterbuck D.R."/>
            <person name="Crowe M.L."/>
            <person name="Dalla E."/>
            <person name="Dalrymple B.P."/>
            <person name="de Bono B."/>
            <person name="Della Gatta G."/>
            <person name="di Bernardo D."/>
            <person name="Down T."/>
            <person name="Engstrom P."/>
            <person name="Fagiolini M."/>
            <person name="Faulkner G."/>
            <person name="Fletcher C.F."/>
            <person name="Fukushima T."/>
            <person name="Furuno M."/>
            <person name="Futaki S."/>
            <person name="Gariboldi M."/>
            <person name="Georgii-Hemming P."/>
            <person name="Gingeras T.R."/>
            <person name="Gojobori T."/>
            <person name="Green R.E."/>
            <person name="Gustincich S."/>
            <person name="Harbers M."/>
            <person name="Hayashi Y."/>
            <person name="Hensch T.K."/>
            <person name="Hirokawa N."/>
            <person name="Hill D."/>
            <person name="Huminiecki L."/>
            <person name="Iacono M."/>
            <person name="Ikeo K."/>
            <person name="Iwama A."/>
            <person name="Ishikawa T."/>
            <person name="Jakt M."/>
            <person name="Kanapin A."/>
            <person name="Katoh M."/>
            <person name="Kawasawa Y."/>
            <person name="Kelso J."/>
            <person name="Kitamura H."/>
            <person name="Kitano H."/>
            <person name="Kollias G."/>
            <person name="Krishnan S.P."/>
            <person name="Kruger A."/>
            <person name="Kummerfeld S.K."/>
            <person name="Kurochkin I.V."/>
            <person name="Lareau L.F."/>
            <person name="Lazarevic D."/>
            <person name="Lipovich L."/>
            <person name="Liu J."/>
            <person name="Liuni S."/>
            <person name="McWilliam S."/>
            <person name="Madan Babu M."/>
            <person name="Madera M."/>
            <person name="Marchionni L."/>
            <person name="Matsuda H."/>
            <person name="Matsuzawa S."/>
            <person name="Miki H."/>
            <person name="Mignone F."/>
            <person name="Miyake S."/>
            <person name="Morris K."/>
            <person name="Mottagui-Tabar S."/>
            <person name="Mulder N."/>
            <person name="Nakano N."/>
            <person name="Nakauchi H."/>
            <person name="Ng P."/>
            <person name="Nilsson R."/>
            <person name="Nishiguchi S."/>
            <person name="Nishikawa S."/>
            <person name="Nori F."/>
            <person name="Ohara O."/>
            <person name="Okazaki Y."/>
            <person name="Orlando V."/>
            <person name="Pang K.C."/>
            <person name="Pavan W.J."/>
            <person name="Pavesi G."/>
            <person name="Pesole G."/>
            <person name="Petrovsky N."/>
            <person name="Piazza S."/>
            <person name="Reed J."/>
            <person name="Reid J.F."/>
            <person name="Ring B.Z."/>
            <person name="Ringwald M."/>
            <person name="Rost B."/>
            <person name="Ruan Y."/>
            <person name="Salzberg S.L."/>
            <person name="Sandelin A."/>
            <person name="Schneider C."/>
            <person name="Schoenbach C."/>
            <person name="Sekiguchi K."/>
            <person name="Semple C.A."/>
            <person name="Seno S."/>
            <person name="Sessa L."/>
            <person name="Sheng Y."/>
            <person name="Shibata Y."/>
            <person name="Shimada H."/>
            <person name="Shimada K."/>
            <person name="Silva D."/>
            <person name="Sinclair B."/>
            <person name="Sperling S."/>
            <person name="Stupka E."/>
            <person name="Sugiura K."/>
            <person name="Sultana R."/>
            <person name="Takenaka Y."/>
            <person name="Taki K."/>
            <person name="Tammoja K."/>
            <person name="Tan S.L."/>
            <person name="Tang S."/>
            <person name="Taylor M.S."/>
            <person name="Tegner J."/>
            <person name="Teichmann S.A."/>
            <person name="Ueda H.R."/>
            <person name="van Nimwegen E."/>
            <person name="Verardo R."/>
            <person name="Wei C.L."/>
            <person name="Yagi K."/>
            <person name="Yamanishi H."/>
            <person name="Zabarovsky E."/>
            <person name="Zhu S."/>
            <person name="Zimmer A."/>
            <person name="Hide W."/>
            <person name="Bult C."/>
            <person name="Grimmond S.M."/>
            <person name="Teasdale R.D."/>
            <person name="Liu E.T."/>
            <person name="Brusic V."/>
            <person name="Quackenbush J."/>
            <person name="Wahlestedt C."/>
            <person name="Mattick J.S."/>
            <person name="Hume D.A."/>
            <person name="Kai C."/>
            <person name="Sasaki D."/>
            <person name="Tomaru Y."/>
            <person name="Fukuda S."/>
            <person name="Kanamori-Katayama M."/>
            <person name="Suzuki M."/>
            <person name="Aoki J."/>
            <person name="Arakawa T."/>
            <person name="Iida J."/>
            <person name="Imamura K."/>
            <person name="Itoh M."/>
            <person name="Kato T."/>
            <person name="Kawaji H."/>
            <person name="Kawagashira N."/>
            <person name="Kawashima T."/>
            <person name="Kojima M."/>
            <person name="Kondo S."/>
            <person name="Konno H."/>
            <person name="Nakano K."/>
            <person name="Ninomiya N."/>
            <person name="Nishio T."/>
            <person name="Okada M."/>
            <person name="Plessy C."/>
            <person name="Shibata K."/>
            <person name="Shiraki T."/>
            <person name="Suzuki S."/>
            <person name="Tagami M."/>
            <person name="Waki K."/>
            <person name="Watahiki A."/>
            <person name="Okamura-Oho Y."/>
            <person name="Suzuki H."/>
            <person name="Kawai J."/>
            <person name="Hayashizaki Y."/>
        </authorList>
    </citation>
    <scope>NUCLEOTIDE SEQUENCE [LARGE SCALE MRNA]</scope>
    <source>
        <strain>C57BL/6J</strain>
        <strain>NOD</strain>
        <tissue>Egg</tissue>
        <tissue>Forelimb</tissue>
        <tissue>Kidney</tissue>
        <tissue>Spleen</tissue>
    </source>
</reference>
<reference key="2">
    <citation type="journal article" date="2004" name="Genome Res.">
        <title>The status, quality, and expansion of the NIH full-length cDNA project: the Mammalian Gene Collection (MGC).</title>
        <authorList>
            <consortium name="The MGC Project Team"/>
        </authorList>
    </citation>
    <scope>NUCLEOTIDE SEQUENCE [LARGE SCALE MRNA]</scope>
    <source>
        <strain>Czech II</strain>
        <strain>FVB/N</strain>
        <tissue>Mammary tumor</tissue>
    </source>
</reference>
<dbReference type="EMBL" id="AK077856">
    <property type="protein sequence ID" value="BAC37035.1"/>
    <property type="molecule type" value="mRNA"/>
</dbReference>
<dbReference type="EMBL" id="AK085376">
    <property type="protein sequence ID" value="BAC39436.1"/>
    <property type="molecule type" value="mRNA"/>
</dbReference>
<dbReference type="EMBL" id="AK171823">
    <property type="protein sequence ID" value="BAE42682.1"/>
    <property type="molecule type" value="mRNA"/>
</dbReference>
<dbReference type="EMBL" id="AK136206">
    <property type="protein sequence ID" value="BAE22874.1"/>
    <property type="molecule type" value="mRNA"/>
</dbReference>
<dbReference type="EMBL" id="BC038399">
    <property type="protein sequence ID" value="AAH38399.1"/>
    <property type="molecule type" value="mRNA"/>
</dbReference>
<dbReference type="EMBL" id="BC050268">
    <property type="protein sequence ID" value="AAH50268.1"/>
    <property type="status" value="ALT_INIT"/>
    <property type="molecule type" value="mRNA"/>
</dbReference>
<dbReference type="CCDS" id="CCDS90381.1"/>
<dbReference type="RefSeq" id="NP_001355304.1">
    <property type="nucleotide sequence ID" value="NM_001368375.1"/>
</dbReference>
<dbReference type="RefSeq" id="NP_780345.1">
    <property type="nucleotide sequence ID" value="NM_175136.2"/>
</dbReference>
<dbReference type="RefSeq" id="XP_006509253.1">
    <property type="nucleotide sequence ID" value="XM_006509190.3"/>
</dbReference>
<dbReference type="SMR" id="Q8BP31"/>
<dbReference type="FunCoup" id="Q8BP31">
    <property type="interactions" value="462"/>
</dbReference>
<dbReference type="STRING" id="10090.ENSMUSP00000040478"/>
<dbReference type="iPTMnet" id="Q8BP31"/>
<dbReference type="PhosphoSitePlus" id="Q8BP31"/>
<dbReference type="PaxDb" id="10090-ENSMUSP00000040478"/>
<dbReference type="Antibodypedia" id="1235">
    <property type="antibodies" value="175 antibodies from 24 providers"/>
</dbReference>
<dbReference type="DNASU" id="68867"/>
<dbReference type="Ensembl" id="ENSMUST00000217278.2">
    <property type="protein sequence ID" value="ENSMUSP00000150893.2"/>
    <property type="gene ID" value="ENSMUSG00000039328.12"/>
</dbReference>
<dbReference type="GeneID" id="68867"/>
<dbReference type="KEGG" id="mmu:68867"/>
<dbReference type="UCSC" id="uc009ljd.1">
    <property type="organism name" value="mouse"/>
</dbReference>
<dbReference type="AGR" id="MGI:1916117"/>
<dbReference type="CTD" id="79845"/>
<dbReference type="MGI" id="MGI:1916117">
    <property type="gene designation" value="Rnf122"/>
</dbReference>
<dbReference type="VEuPathDB" id="HostDB:ENSMUSG00000039328"/>
<dbReference type="eggNOG" id="KOG0800">
    <property type="taxonomic scope" value="Eukaryota"/>
</dbReference>
<dbReference type="GeneTree" id="ENSGT00940000159152"/>
<dbReference type="InParanoid" id="Q8BP31"/>
<dbReference type="OMA" id="ANKSCTM"/>
<dbReference type="OrthoDB" id="8062037at2759"/>
<dbReference type="PhylomeDB" id="Q8BP31"/>
<dbReference type="BioGRID-ORCS" id="68867">
    <property type="hits" value="2 hits in 78 CRISPR screens"/>
</dbReference>
<dbReference type="PRO" id="PR:Q8BP31"/>
<dbReference type="Proteomes" id="UP000000589">
    <property type="component" value="Chromosome 8"/>
</dbReference>
<dbReference type="RNAct" id="Q8BP31">
    <property type="molecule type" value="protein"/>
</dbReference>
<dbReference type="Bgee" id="ENSMUSG00000039328">
    <property type="expression patterns" value="Expressed in animal zygote and 164 other cell types or tissues"/>
</dbReference>
<dbReference type="ExpressionAtlas" id="Q8BP31">
    <property type="expression patterns" value="baseline and differential"/>
</dbReference>
<dbReference type="GO" id="GO:0005737">
    <property type="term" value="C:cytoplasm"/>
    <property type="evidence" value="ECO:0000250"/>
    <property type="project" value="UniProtKB"/>
</dbReference>
<dbReference type="GO" id="GO:0005783">
    <property type="term" value="C:endoplasmic reticulum"/>
    <property type="evidence" value="ECO:0007669"/>
    <property type="project" value="UniProtKB-SubCell"/>
</dbReference>
<dbReference type="GO" id="GO:0005794">
    <property type="term" value="C:Golgi apparatus"/>
    <property type="evidence" value="ECO:0007669"/>
    <property type="project" value="UniProtKB-SubCell"/>
</dbReference>
<dbReference type="GO" id="GO:0016020">
    <property type="term" value="C:membrane"/>
    <property type="evidence" value="ECO:0007669"/>
    <property type="project" value="UniProtKB-SubCell"/>
</dbReference>
<dbReference type="GO" id="GO:0061630">
    <property type="term" value="F:ubiquitin protein ligase activity"/>
    <property type="evidence" value="ECO:0000250"/>
    <property type="project" value="UniProtKB"/>
</dbReference>
<dbReference type="GO" id="GO:0008270">
    <property type="term" value="F:zinc ion binding"/>
    <property type="evidence" value="ECO:0007669"/>
    <property type="project" value="UniProtKB-KW"/>
</dbReference>
<dbReference type="GO" id="GO:0010917">
    <property type="term" value="P:negative regulation of mitochondrial membrane potential"/>
    <property type="evidence" value="ECO:0000250"/>
    <property type="project" value="UniProtKB"/>
</dbReference>
<dbReference type="GO" id="GO:0043065">
    <property type="term" value="P:positive regulation of apoptotic process"/>
    <property type="evidence" value="ECO:0000250"/>
    <property type="project" value="UniProtKB"/>
</dbReference>
<dbReference type="GO" id="GO:0043161">
    <property type="term" value="P:proteasome-mediated ubiquitin-dependent protein catabolic process"/>
    <property type="evidence" value="ECO:0000250"/>
    <property type="project" value="UniProtKB"/>
</dbReference>
<dbReference type="GO" id="GO:0051865">
    <property type="term" value="P:protein autoubiquitination"/>
    <property type="evidence" value="ECO:0000250"/>
    <property type="project" value="UniProtKB"/>
</dbReference>
<dbReference type="CDD" id="cd16676">
    <property type="entry name" value="RING-H2_RNF122"/>
    <property type="match status" value="1"/>
</dbReference>
<dbReference type="FunFam" id="3.30.40.10:FF:000423">
    <property type="entry name" value="Ring finger protein 122"/>
    <property type="match status" value="1"/>
</dbReference>
<dbReference type="Gene3D" id="3.30.40.10">
    <property type="entry name" value="Zinc/RING finger domain, C3HC4 (zinc finger)"/>
    <property type="match status" value="1"/>
</dbReference>
<dbReference type="InterPro" id="IPR051834">
    <property type="entry name" value="RING_finger_E3_ligase"/>
</dbReference>
<dbReference type="InterPro" id="IPR001841">
    <property type="entry name" value="Znf_RING"/>
</dbReference>
<dbReference type="InterPro" id="IPR013083">
    <property type="entry name" value="Znf_RING/FYVE/PHD"/>
</dbReference>
<dbReference type="PANTHER" id="PTHR45931:SF3">
    <property type="entry name" value="RING ZINC FINGER-CONTAINING PROTEIN"/>
    <property type="match status" value="1"/>
</dbReference>
<dbReference type="PANTHER" id="PTHR45931">
    <property type="entry name" value="SI:CH211-59O9.10"/>
    <property type="match status" value="1"/>
</dbReference>
<dbReference type="Pfam" id="PF13639">
    <property type="entry name" value="zf-RING_2"/>
    <property type="match status" value="1"/>
</dbReference>
<dbReference type="SMART" id="SM00184">
    <property type="entry name" value="RING"/>
    <property type="match status" value="1"/>
</dbReference>
<dbReference type="SUPFAM" id="SSF57850">
    <property type="entry name" value="RING/U-box"/>
    <property type="match status" value="1"/>
</dbReference>
<dbReference type="PROSITE" id="PS50089">
    <property type="entry name" value="ZF_RING_2"/>
    <property type="match status" value="1"/>
</dbReference>
<name>RN122_MOUSE</name>
<feature type="chain" id="PRO_0000247853" description="RING finger protein 122">
    <location>
        <begin position="1"/>
        <end position="155"/>
    </location>
</feature>
<feature type="transmembrane region" description="Helical" evidence="2">
    <location>
        <begin position="40"/>
        <end position="60"/>
    </location>
</feature>
<feature type="zinc finger region" description="RING-type; atypical" evidence="3">
    <location>
        <begin position="93"/>
        <end position="134"/>
    </location>
</feature>
<feature type="sequence conflict" description="In Ref. 1; BAC39436 and 2; AAH38399." evidence="4" ref="1 2">
    <location>
        <position position="91"/>
    </location>
</feature>
<evidence type="ECO:0000250" key="1"/>
<evidence type="ECO:0000255" key="2"/>
<evidence type="ECO:0000255" key="3">
    <source>
        <dbReference type="PROSITE-ProRule" id="PRU00175"/>
    </source>
</evidence>
<evidence type="ECO:0000305" key="4"/>
<comment type="function">
    <text evidence="1">May induce necrosis and apoptosis. May play a role in cell viability (By similarity).</text>
</comment>
<comment type="subcellular location">
    <subcellularLocation>
        <location>Golgi apparatus</location>
    </subcellularLocation>
    <subcellularLocation>
        <location evidence="1">Endoplasmic reticulum</location>
    </subcellularLocation>
    <subcellularLocation>
        <location evidence="4">Membrane</location>
        <topology evidence="4">Single-pass membrane protein</topology>
    </subcellularLocation>
</comment>
<comment type="sequence caution" evidence="4">
    <conflict type="erroneous initiation">
        <sequence resource="EMBL-CDS" id="AAH50268"/>
    </conflict>
</comment>
<sequence>MHPFQWCNGCFCGLGLVSTNKSCSMPPISFQDLPLNIYMVIFGTGIFVFMLSLIFCCYFISKLRNQAQSERYGYKEVVLKGDAKKLQLYGQTCAVCLEDFKGKDELGVLPCQHAFHRKCLVKWLEVRCVCPMCNKPIAGPTETSQSIGILLDELV</sequence>
<organism>
    <name type="scientific">Mus musculus</name>
    <name type="common">Mouse</name>
    <dbReference type="NCBI Taxonomy" id="10090"/>
    <lineage>
        <taxon>Eukaryota</taxon>
        <taxon>Metazoa</taxon>
        <taxon>Chordata</taxon>
        <taxon>Craniata</taxon>
        <taxon>Vertebrata</taxon>
        <taxon>Euteleostomi</taxon>
        <taxon>Mammalia</taxon>
        <taxon>Eutheria</taxon>
        <taxon>Euarchontoglires</taxon>
        <taxon>Glires</taxon>
        <taxon>Rodentia</taxon>
        <taxon>Myomorpha</taxon>
        <taxon>Muroidea</taxon>
        <taxon>Muridae</taxon>
        <taxon>Murinae</taxon>
        <taxon>Mus</taxon>
        <taxon>Mus</taxon>
    </lineage>
</organism>
<gene>
    <name type="primary">Rnf122</name>
</gene>
<protein>
    <recommendedName>
        <fullName>RING finger protein 122</fullName>
    </recommendedName>
</protein>
<accession>Q8BP31</accession>
<accession>Q80VA7</accession>
<accession>Q8BGD3</accession>
<proteinExistence type="evidence at transcript level"/>